<protein>
    <recommendedName>
        <fullName evidence="1">Nucleoside triphosphate/diphosphate phosphatase</fullName>
        <ecNumber evidence="1">3.6.1.15</ecNumber>
        <ecNumber evidence="1">3.6.1.6</ecNumber>
    </recommendedName>
</protein>
<organism>
    <name type="scientific">Streptococcus thermophilus (strain ATCC BAA-250 / LMG 18311)</name>
    <dbReference type="NCBI Taxonomy" id="264199"/>
    <lineage>
        <taxon>Bacteria</taxon>
        <taxon>Bacillati</taxon>
        <taxon>Bacillota</taxon>
        <taxon>Bacilli</taxon>
        <taxon>Lactobacillales</taxon>
        <taxon>Streptococcaceae</taxon>
        <taxon>Streptococcus</taxon>
    </lineage>
</organism>
<feature type="chain" id="PRO_0000248133" description="Nucleoside triphosphate/diphosphate phosphatase">
    <location>
        <begin position="1"/>
        <end position="177"/>
    </location>
</feature>
<feature type="active site" description="Proton donor" evidence="1">
    <location>
        <position position="23"/>
    </location>
</feature>
<feature type="binding site" evidence="1">
    <location>
        <position position="87"/>
    </location>
    <ligand>
        <name>Mg(2+)</name>
        <dbReference type="ChEBI" id="CHEBI:18420"/>
        <label>1</label>
    </ligand>
</feature>
<feature type="binding site" evidence="1">
    <location>
        <position position="103"/>
    </location>
    <ligand>
        <name>Mg(2+)</name>
        <dbReference type="ChEBI" id="CHEBI:18420"/>
        <label>1</label>
    </ligand>
</feature>
<feature type="binding site" evidence="1">
    <location>
        <position position="105"/>
    </location>
    <ligand>
        <name>Mg(2+)</name>
        <dbReference type="ChEBI" id="CHEBI:18420"/>
        <label>2</label>
    </ligand>
</feature>
<feature type="binding site" evidence="1">
    <location>
        <position position="107"/>
    </location>
    <ligand>
        <name>Mg(2+)</name>
        <dbReference type="ChEBI" id="CHEBI:18420"/>
        <label>1</label>
    </ligand>
</feature>
<feature type="binding site" evidence="1">
    <location>
        <position position="107"/>
    </location>
    <ligand>
        <name>Mg(2+)</name>
        <dbReference type="ChEBI" id="CHEBI:18420"/>
        <label>2</label>
    </ligand>
</feature>
<feature type="binding site" evidence="1">
    <location>
        <position position="120"/>
    </location>
    <ligand>
        <name>Mg(2+)</name>
        <dbReference type="ChEBI" id="CHEBI:18420"/>
        <label>2</label>
    </ligand>
</feature>
<feature type="binding site" evidence="1">
    <location>
        <position position="123"/>
    </location>
    <ligand>
        <name>Mg(2+)</name>
        <dbReference type="ChEBI" id="CHEBI:18420"/>
        <label>2</label>
    </ligand>
</feature>
<name>NTDP_STRT2</name>
<evidence type="ECO:0000255" key="1">
    <source>
        <dbReference type="HAMAP-Rule" id="MF_01568"/>
    </source>
</evidence>
<gene>
    <name type="ordered locus">stu0374</name>
</gene>
<comment type="function">
    <text evidence="1">Has nucleoside phosphatase activity towards nucleoside triphosphates and nucleoside diphosphates.</text>
</comment>
<comment type="catalytic activity">
    <reaction evidence="1">
        <text>a ribonucleoside 5'-triphosphate + H2O = a ribonucleoside 5'-diphosphate + phosphate + H(+)</text>
        <dbReference type="Rhea" id="RHEA:23680"/>
        <dbReference type="ChEBI" id="CHEBI:15377"/>
        <dbReference type="ChEBI" id="CHEBI:15378"/>
        <dbReference type="ChEBI" id="CHEBI:43474"/>
        <dbReference type="ChEBI" id="CHEBI:57930"/>
        <dbReference type="ChEBI" id="CHEBI:61557"/>
        <dbReference type="EC" id="3.6.1.15"/>
    </reaction>
</comment>
<comment type="catalytic activity">
    <reaction evidence="1">
        <text>a ribonucleoside 5'-diphosphate + H2O = a ribonucleoside 5'-phosphate + phosphate + H(+)</text>
        <dbReference type="Rhea" id="RHEA:36799"/>
        <dbReference type="ChEBI" id="CHEBI:15377"/>
        <dbReference type="ChEBI" id="CHEBI:15378"/>
        <dbReference type="ChEBI" id="CHEBI:43474"/>
        <dbReference type="ChEBI" id="CHEBI:57930"/>
        <dbReference type="ChEBI" id="CHEBI:58043"/>
        <dbReference type="EC" id="3.6.1.6"/>
    </reaction>
</comment>
<comment type="cofactor">
    <cofactor evidence="1">
        <name>Mg(2+)</name>
        <dbReference type="ChEBI" id="CHEBI:18420"/>
    </cofactor>
</comment>
<comment type="similarity">
    <text evidence="1">Belongs to the Ntdp family.</text>
</comment>
<keyword id="KW-0378">Hydrolase</keyword>
<keyword id="KW-0460">Magnesium</keyword>
<keyword id="KW-0479">Metal-binding</keyword>
<keyword id="KW-1185">Reference proteome</keyword>
<dbReference type="EC" id="3.6.1.15" evidence="1"/>
<dbReference type="EC" id="3.6.1.6" evidence="1"/>
<dbReference type="EMBL" id="CP000023">
    <property type="protein sequence ID" value="AAV60093.1"/>
    <property type="molecule type" value="Genomic_DNA"/>
</dbReference>
<dbReference type="RefSeq" id="WP_002949762.1">
    <property type="nucleotide sequence ID" value="NC_006448.1"/>
</dbReference>
<dbReference type="SMR" id="Q5M5S9"/>
<dbReference type="STRING" id="264199.stu0374"/>
<dbReference type="KEGG" id="stl:stu0374"/>
<dbReference type="eggNOG" id="COG3557">
    <property type="taxonomic scope" value="Bacteria"/>
</dbReference>
<dbReference type="HOGENOM" id="CLU_109787_1_0_9"/>
<dbReference type="Proteomes" id="UP000001170">
    <property type="component" value="Chromosome"/>
</dbReference>
<dbReference type="GO" id="GO:0000287">
    <property type="term" value="F:magnesium ion binding"/>
    <property type="evidence" value="ECO:0007669"/>
    <property type="project" value="UniProtKB-UniRule"/>
</dbReference>
<dbReference type="GO" id="GO:0017110">
    <property type="term" value="F:nucleoside diphosphate phosphatase activity"/>
    <property type="evidence" value="ECO:0007669"/>
    <property type="project" value="UniProtKB-UniRule"/>
</dbReference>
<dbReference type="GO" id="GO:0017111">
    <property type="term" value="F:ribonucleoside triphosphate phosphatase activity"/>
    <property type="evidence" value="ECO:0007669"/>
    <property type="project" value="UniProtKB-UniRule"/>
</dbReference>
<dbReference type="Gene3D" id="2.40.380.10">
    <property type="entry name" value="FomD-like"/>
    <property type="match status" value="1"/>
</dbReference>
<dbReference type="HAMAP" id="MF_01568">
    <property type="entry name" value="Ntdp"/>
    <property type="match status" value="1"/>
</dbReference>
<dbReference type="InterPro" id="IPR007295">
    <property type="entry name" value="DUF402"/>
</dbReference>
<dbReference type="InterPro" id="IPR035930">
    <property type="entry name" value="FomD-like_sf"/>
</dbReference>
<dbReference type="InterPro" id="IPR050212">
    <property type="entry name" value="Ntdp-like"/>
</dbReference>
<dbReference type="InterPro" id="IPR016882">
    <property type="entry name" value="SA1684"/>
</dbReference>
<dbReference type="NCBIfam" id="NF010183">
    <property type="entry name" value="PRK13662.1"/>
    <property type="match status" value="1"/>
</dbReference>
<dbReference type="PANTHER" id="PTHR39159">
    <property type="match status" value="1"/>
</dbReference>
<dbReference type="PANTHER" id="PTHR39159:SF1">
    <property type="entry name" value="UPF0374 PROTEIN YGAC"/>
    <property type="match status" value="1"/>
</dbReference>
<dbReference type="Pfam" id="PF04167">
    <property type="entry name" value="DUF402"/>
    <property type="match status" value="1"/>
</dbReference>
<dbReference type="PIRSF" id="PIRSF028345">
    <property type="entry name" value="UCP028345"/>
    <property type="match status" value="1"/>
</dbReference>
<dbReference type="SUPFAM" id="SSF159234">
    <property type="entry name" value="FomD-like"/>
    <property type="match status" value="1"/>
</dbReference>
<proteinExistence type="inferred from homology"/>
<sequence>MKLPKEGDFITIQSYKHDGRLHRTWRDTMVLKTTENAVIGVNDHTLVTEADGRRWVTREPAIVYFHKKYWFNIIAMIRDNGISYYCNLASPYVLDQEALKYIDYDLDVKVFADGEKKLLDVDEYEIHKKEMHYSPDIDYILKEHVKILVDWINNGKGPFSQSYVNIWYKRYLELRNR</sequence>
<accession>Q5M5S9</accession>
<reference key="1">
    <citation type="journal article" date="2004" name="Nat. Biotechnol.">
        <title>Complete sequence and comparative genome analysis of the dairy bacterium Streptococcus thermophilus.</title>
        <authorList>
            <person name="Bolotin A."/>
            <person name="Quinquis B."/>
            <person name="Renault P."/>
            <person name="Sorokin A."/>
            <person name="Ehrlich S.D."/>
            <person name="Kulakauskas S."/>
            <person name="Lapidus A."/>
            <person name="Goltsman E."/>
            <person name="Mazur M."/>
            <person name="Pusch G.D."/>
            <person name="Fonstein M."/>
            <person name="Overbeek R."/>
            <person name="Kyprides N."/>
            <person name="Purnelle B."/>
            <person name="Prozzi D."/>
            <person name="Ngui K."/>
            <person name="Masuy D."/>
            <person name="Hancy F."/>
            <person name="Burteau S."/>
            <person name="Boutry M."/>
            <person name="Delcour J."/>
            <person name="Goffeau A."/>
            <person name="Hols P."/>
        </authorList>
    </citation>
    <scope>NUCLEOTIDE SEQUENCE [LARGE SCALE GENOMIC DNA]</scope>
    <source>
        <strain>ATCC BAA-250 / LMG 18311</strain>
    </source>
</reference>